<organism>
    <name type="scientific">Rattus norvegicus</name>
    <name type="common">Rat</name>
    <dbReference type="NCBI Taxonomy" id="10116"/>
    <lineage>
        <taxon>Eukaryota</taxon>
        <taxon>Metazoa</taxon>
        <taxon>Chordata</taxon>
        <taxon>Craniata</taxon>
        <taxon>Vertebrata</taxon>
        <taxon>Euteleostomi</taxon>
        <taxon>Mammalia</taxon>
        <taxon>Eutheria</taxon>
        <taxon>Euarchontoglires</taxon>
        <taxon>Glires</taxon>
        <taxon>Rodentia</taxon>
        <taxon>Myomorpha</taxon>
        <taxon>Muroidea</taxon>
        <taxon>Muridae</taxon>
        <taxon>Murinae</taxon>
        <taxon>Rattus</taxon>
    </lineage>
</organism>
<comment type="function">
    <text evidence="1">Amidase that catalyzes the last step of diphthamide biosynthesis using ammonium and ATP. Diphthamide biosynthesis consists in the conversion of an L-histidine residue in the translation elongation factor eEF-2 (EEF2) to diphthamide (By similarity).</text>
</comment>
<comment type="catalytic activity">
    <reaction>
        <text>diphthine-[translation elongation factor 2] + NH4(+) + ATP = diphthamide-[translation elongation factor 2] + AMP + diphosphate + H(+)</text>
        <dbReference type="Rhea" id="RHEA:19753"/>
        <dbReference type="Rhea" id="RHEA-COMP:10172"/>
        <dbReference type="Rhea" id="RHEA-COMP:10174"/>
        <dbReference type="ChEBI" id="CHEBI:15378"/>
        <dbReference type="ChEBI" id="CHEBI:16692"/>
        <dbReference type="ChEBI" id="CHEBI:28938"/>
        <dbReference type="ChEBI" id="CHEBI:30616"/>
        <dbReference type="ChEBI" id="CHEBI:33019"/>
        <dbReference type="ChEBI" id="CHEBI:82696"/>
        <dbReference type="ChEBI" id="CHEBI:456215"/>
        <dbReference type="EC" id="6.3.1.14"/>
    </reaction>
</comment>
<comment type="pathway">
    <text>Protein modification; peptidyl-diphthamide biosynthesis.</text>
</comment>
<comment type="similarity">
    <text evidence="3">Belongs to the Diphthine--ammonia ligase family.</text>
</comment>
<gene>
    <name type="primary">Dph6</name>
    <name type="synonym">Atpbd4</name>
</gene>
<evidence type="ECO:0000250" key="1"/>
<evidence type="ECO:0000250" key="2">
    <source>
        <dbReference type="UniProtKB" id="Q9CQ28"/>
    </source>
</evidence>
<evidence type="ECO:0000305" key="3"/>
<reference key="1">
    <citation type="journal article" date="2004" name="Genome Res.">
        <title>The status, quality, and expansion of the NIH full-length cDNA project: the Mammalian Gene Collection (MGC).</title>
        <authorList>
            <consortium name="The MGC Project Team"/>
        </authorList>
    </citation>
    <scope>NUCLEOTIDE SEQUENCE [LARGE SCALE MRNA]</scope>
    <source>
        <tissue>Testis</tissue>
    </source>
</reference>
<protein>
    <recommendedName>
        <fullName>Diphthine--ammonia ligase</fullName>
        <ecNumber>6.3.1.14</ecNumber>
    </recommendedName>
    <alternativeName>
        <fullName>ATP-binding domain-containing protein 4</fullName>
    </alternativeName>
    <alternativeName>
        <fullName>Diphthamide synthase</fullName>
    </alternativeName>
    <alternativeName>
        <fullName>Diphthamide synthetase</fullName>
    </alternativeName>
    <alternativeName>
        <fullName>Protein DPH6 homolog</fullName>
    </alternativeName>
</protein>
<name>DPH6_RAT</name>
<dbReference type="EC" id="6.3.1.14"/>
<dbReference type="EMBL" id="BC087148">
    <property type="protein sequence ID" value="AAH87148.1"/>
    <property type="molecule type" value="mRNA"/>
</dbReference>
<dbReference type="RefSeq" id="NP_001014203.1">
    <property type="nucleotide sequence ID" value="NM_001014181.1"/>
</dbReference>
<dbReference type="SMR" id="Q5M9F5"/>
<dbReference type="FunCoup" id="Q5M9F5">
    <property type="interactions" value="892"/>
</dbReference>
<dbReference type="STRING" id="10116.ENSRNOP00000053362"/>
<dbReference type="PhosphoSitePlus" id="Q5M9F5"/>
<dbReference type="Ensembl" id="ENSRNOT00000107739.1">
    <property type="protein sequence ID" value="ENSRNOP00000076614.1"/>
    <property type="gene ID" value="ENSRNOG00000037356.5"/>
</dbReference>
<dbReference type="GeneID" id="362191"/>
<dbReference type="KEGG" id="rno:362191"/>
<dbReference type="UCSC" id="RGD:1310006">
    <property type="organism name" value="rat"/>
</dbReference>
<dbReference type="AGR" id="RGD:1310006"/>
<dbReference type="CTD" id="89978"/>
<dbReference type="RGD" id="1310006">
    <property type="gene designation" value="Dph6"/>
</dbReference>
<dbReference type="GeneTree" id="ENSGT00420000029820"/>
<dbReference type="InParanoid" id="Q5M9F5"/>
<dbReference type="OrthoDB" id="65419at9989"/>
<dbReference type="PhylomeDB" id="Q5M9F5"/>
<dbReference type="Reactome" id="R-RNO-5358493">
    <property type="pathway name" value="Synthesis of diphthamide-EEF2"/>
</dbReference>
<dbReference type="UniPathway" id="UPA00559"/>
<dbReference type="PRO" id="PR:Q5M9F5"/>
<dbReference type="Proteomes" id="UP000002494">
    <property type="component" value="Chromosome 3"/>
</dbReference>
<dbReference type="GO" id="GO:0005524">
    <property type="term" value="F:ATP binding"/>
    <property type="evidence" value="ECO:0007669"/>
    <property type="project" value="UniProtKB-KW"/>
</dbReference>
<dbReference type="GO" id="GO:0017178">
    <property type="term" value="F:diphthine-ammonia ligase activity"/>
    <property type="evidence" value="ECO:0000266"/>
    <property type="project" value="RGD"/>
</dbReference>
<dbReference type="GO" id="GO:0017183">
    <property type="term" value="P:protein histidyl modification to diphthamide"/>
    <property type="evidence" value="ECO:0000318"/>
    <property type="project" value="GO_Central"/>
</dbReference>
<dbReference type="CDD" id="cd01994">
    <property type="entry name" value="AANH_PF0828-like"/>
    <property type="match status" value="1"/>
</dbReference>
<dbReference type="FunFam" id="3.90.1490.10:FF:000001">
    <property type="entry name" value="Diphthine--ammonia ligase"/>
    <property type="match status" value="1"/>
</dbReference>
<dbReference type="FunFam" id="3.40.50.620:FF:000069">
    <property type="entry name" value="diphthine--ammonia ligase"/>
    <property type="match status" value="1"/>
</dbReference>
<dbReference type="Gene3D" id="3.40.50.620">
    <property type="entry name" value="HUPs"/>
    <property type="match status" value="1"/>
</dbReference>
<dbReference type="Gene3D" id="3.90.1490.10">
    <property type="entry name" value="putative n-type atp pyrophosphatase, domain 2"/>
    <property type="match status" value="1"/>
</dbReference>
<dbReference type="InterPro" id="IPR002761">
    <property type="entry name" value="Diphthami_syn_dom"/>
</dbReference>
<dbReference type="InterPro" id="IPR030662">
    <property type="entry name" value="DPH6/MJ0570"/>
</dbReference>
<dbReference type="InterPro" id="IPR014729">
    <property type="entry name" value="Rossmann-like_a/b/a_fold"/>
</dbReference>
<dbReference type="NCBIfam" id="TIGR00290">
    <property type="entry name" value="MJ0570_dom"/>
    <property type="match status" value="1"/>
</dbReference>
<dbReference type="PANTHER" id="PTHR12196:SF2">
    <property type="entry name" value="DIPHTHINE--AMMONIA LIGASE"/>
    <property type="match status" value="1"/>
</dbReference>
<dbReference type="PANTHER" id="PTHR12196">
    <property type="entry name" value="DOMAIN OF UNKNOWN FUNCTION 71 DUF71 -CONTAINING PROTEIN"/>
    <property type="match status" value="1"/>
</dbReference>
<dbReference type="Pfam" id="PF01902">
    <property type="entry name" value="Diphthami_syn_2"/>
    <property type="match status" value="1"/>
</dbReference>
<dbReference type="PIRSF" id="PIRSF039123">
    <property type="entry name" value="Diphthamide_synthase"/>
    <property type="match status" value="1"/>
</dbReference>
<dbReference type="SUPFAM" id="SSF52402">
    <property type="entry name" value="Adenine nucleotide alpha hydrolases-like"/>
    <property type="match status" value="1"/>
</dbReference>
<accession>Q5M9F5</accession>
<feature type="chain" id="PRO_0000282399" description="Diphthine--ammonia ligase">
    <location>
        <begin position="1"/>
        <end position="267"/>
    </location>
</feature>
<feature type="modified residue" description="Phosphotyrosine" evidence="2">
    <location>
        <position position="97"/>
    </location>
</feature>
<proteinExistence type="evidence at transcript level"/>
<sequence length="267" mass="29984">MRVAALISGGKDSCYNMMRCIAEGHQIVALANLRPDDNQVESDELDSYMYQTVGHHAIDLYAEAMALPLYRRTIRGRSLETGRVYTRCEGDEVEDLYELLKLVKEKEEIEGVSVGAILSDYQRVRVENVCKRLNLQPLAYLWQRNQEDLLREMIASNIEAIIIKVAALGLDPDKHLGKTLGEMEPYLLELSKKYGVHVCGEGGEYETFTLDCPLFKKKIVVDTSEAVIHSADAFAPVAYLRLSGLHLEEKVSSVPGDDETTSYIHNS</sequence>
<keyword id="KW-0067">ATP-binding</keyword>
<keyword id="KW-0436">Ligase</keyword>
<keyword id="KW-0547">Nucleotide-binding</keyword>
<keyword id="KW-0597">Phosphoprotein</keyword>
<keyword id="KW-1185">Reference proteome</keyword>